<proteinExistence type="inferred from homology"/>
<accession>A5VXS3</accession>
<protein>
    <recommendedName>
        <fullName evidence="1">Large ribosomal subunit protein bL17</fullName>
    </recommendedName>
    <alternativeName>
        <fullName evidence="2">50S ribosomal protein L17</fullName>
    </alternativeName>
</protein>
<evidence type="ECO:0000255" key="1">
    <source>
        <dbReference type="HAMAP-Rule" id="MF_01368"/>
    </source>
</evidence>
<evidence type="ECO:0000305" key="2"/>
<sequence length="128" mass="14363">MRHRKSGRHLSRTSSHRKAMFQNMAVSLIEHELIKTTLPKAKELRRVAEPLITLAKEDSVANRRLAFDRTRSKSAVGKLFNDLGKRYATRQGGYLRILKCGFRAGDNAPMAYVELVDRPVGGAVEAAE</sequence>
<comment type="subunit">
    <text evidence="1">Part of the 50S ribosomal subunit. Contacts protein L32.</text>
</comment>
<comment type="similarity">
    <text evidence="1">Belongs to the bacterial ribosomal protein bL17 family.</text>
</comment>
<keyword id="KW-0687">Ribonucleoprotein</keyword>
<keyword id="KW-0689">Ribosomal protein</keyword>
<reference key="1">
    <citation type="submission" date="2007-05" db="EMBL/GenBank/DDBJ databases">
        <title>Complete sequence of Pseudomonas putida F1.</title>
        <authorList>
            <consortium name="US DOE Joint Genome Institute"/>
            <person name="Copeland A."/>
            <person name="Lucas S."/>
            <person name="Lapidus A."/>
            <person name="Barry K."/>
            <person name="Detter J.C."/>
            <person name="Glavina del Rio T."/>
            <person name="Hammon N."/>
            <person name="Israni S."/>
            <person name="Dalin E."/>
            <person name="Tice H."/>
            <person name="Pitluck S."/>
            <person name="Chain P."/>
            <person name="Malfatti S."/>
            <person name="Shin M."/>
            <person name="Vergez L."/>
            <person name="Schmutz J."/>
            <person name="Larimer F."/>
            <person name="Land M."/>
            <person name="Hauser L."/>
            <person name="Kyrpides N."/>
            <person name="Lykidis A."/>
            <person name="Parales R."/>
            <person name="Richardson P."/>
        </authorList>
    </citation>
    <scope>NUCLEOTIDE SEQUENCE [LARGE SCALE GENOMIC DNA]</scope>
    <source>
        <strain>ATCC 700007 / DSM 6899 / JCM 31910 / BCRC 17059 / LMG 24140 / F1</strain>
    </source>
</reference>
<gene>
    <name evidence="1" type="primary">rplQ</name>
    <name type="ordered locus">Pput_0513</name>
</gene>
<feature type="chain" id="PRO_1000055920" description="Large ribosomal subunit protein bL17">
    <location>
        <begin position="1"/>
        <end position="128"/>
    </location>
</feature>
<name>RL17_PSEP1</name>
<organism>
    <name type="scientific">Pseudomonas putida (strain ATCC 700007 / DSM 6899 / JCM 31910 / BCRC 17059 / LMG 24140 / F1)</name>
    <dbReference type="NCBI Taxonomy" id="351746"/>
    <lineage>
        <taxon>Bacteria</taxon>
        <taxon>Pseudomonadati</taxon>
        <taxon>Pseudomonadota</taxon>
        <taxon>Gammaproteobacteria</taxon>
        <taxon>Pseudomonadales</taxon>
        <taxon>Pseudomonadaceae</taxon>
        <taxon>Pseudomonas</taxon>
    </lineage>
</organism>
<dbReference type="EMBL" id="CP000712">
    <property type="protein sequence ID" value="ABQ76683.1"/>
    <property type="molecule type" value="Genomic_DNA"/>
</dbReference>
<dbReference type="SMR" id="A5VXS3"/>
<dbReference type="KEGG" id="ppf:Pput_0513"/>
<dbReference type="eggNOG" id="COG0203">
    <property type="taxonomic scope" value="Bacteria"/>
</dbReference>
<dbReference type="HOGENOM" id="CLU_074407_2_0_6"/>
<dbReference type="GO" id="GO:0022625">
    <property type="term" value="C:cytosolic large ribosomal subunit"/>
    <property type="evidence" value="ECO:0007669"/>
    <property type="project" value="TreeGrafter"/>
</dbReference>
<dbReference type="GO" id="GO:0003735">
    <property type="term" value="F:structural constituent of ribosome"/>
    <property type="evidence" value="ECO:0007669"/>
    <property type="project" value="InterPro"/>
</dbReference>
<dbReference type="GO" id="GO:0006412">
    <property type="term" value="P:translation"/>
    <property type="evidence" value="ECO:0007669"/>
    <property type="project" value="UniProtKB-UniRule"/>
</dbReference>
<dbReference type="FunFam" id="3.90.1030.10:FF:000001">
    <property type="entry name" value="50S ribosomal protein L17"/>
    <property type="match status" value="1"/>
</dbReference>
<dbReference type="Gene3D" id="3.90.1030.10">
    <property type="entry name" value="Ribosomal protein L17"/>
    <property type="match status" value="1"/>
</dbReference>
<dbReference type="HAMAP" id="MF_01368">
    <property type="entry name" value="Ribosomal_bL17"/>
    <property type="match status" value="1"/>
</dbReference>
<dbReference type="InterPro" id="IPR000456">
    <property type="entry name" value="Ribosomal_bL17"/>
</dbReference>
<dbReference type="InterPro" id="IPR047859">
    <property type="entry name" value="Ribosomal_bL17_CS"/>
</dbReference>
<dbReference type="InterPro" id="IPR036373">
    <property type="entry name" value="Ribosomal_bL17_sf"/>
</dbReference>
<dbReference type="NCBIfam" id="TIGR00059">
    <property type="entry name" value="L17"/>
    <property type="match status" value="1"/>
</dbReference>
<dbReference type="PANTHER" id="PTHR14413:SF16">
    <property type="entry name" value="LARGE RIBOSOMAL SUBUNIT PROTEIN BL17M"/>
    <property type="match status" value="1"/>
</dbReference>
<dbReference type="PANTHER" id="PTHR14413">
    <property type="entry name" value="RIBOSOMAL PROTEIN L17"/>
    <property type="match status" value="1"/>
</dbReference>
<dbReference type="Pfam" id="PF01196">
    <property type="entry name" value="Ribosomal_L17"/>
    <property type="match status" value="1"/>
</dbReference>
<dbReference type="SUPFAM" id="SSF64263">
    <property type="entry name" value="Prokaryotic ribosomal protein L17"/>
    <property type="match status" value="1"/>
</dbReference>
<dbReference type="PROSITE" id="PS01167">
    <property type="entry name" value="RIBOSOMAL_L17"/>
    <property type="match status" value="1"/>
</dbReference>